<organism>
    <name type="scientific">Oryza sativa subsp. japonica</name>
    <name type="common">Rice</name>
    <dbReference type="NCBI Taxonomy" id="39947"/>
    <lineage>
        <taxon>Eukaryota</taxon>
        <taxon>Viridiplantae</taxon>
        <taxon>Streptophyta</taxon>
        <taxon>Embryophyta</taxon>
        <taxon>Tracheophyta</taxon>
        <taxon>Spermatophyta</taxon>
        <taxon>Magnoliopsida</taxon>
        <taxon>Liliopsida</taxon>
        <taxon>Poales</taxon>
        <taxon>Poaceae</taxon>
        <taxon>BOP clade</taxon>
        <taxon>Oryzoideae</taxon>
        <taxon>Oryzeae</taxon>
        <taxon>Oryzinae</taxon>
        <taxon>Oryza</taxon>
        <taxon>Oryza sativa</taxon>
    </lineage>
</organism>
<feature type="chain" id="PRO_0000239752" description="Mitogen-activated protein kinase 9">
    <location>
        <begin position="1"/>
        <end position="700"/>
    </location>
</feature>
<feature type="domain" description="Protein kinase" evidence="2">
    <location>
        <begin position="107"/>
        <end position="398"/>
    </location>
</feature>
<feature type="region of interest" description="Disordered" evidence="3">
    <location>
        <begin position="475"/>
        <end position="523"/>
    </location>
</feature>
<feature type="short sequence motif" description="TXY">
    <location>
        <begin position="269"/>
        <end position="271"/>
    </location>
</feature>
<feature type="active site" description="Proton acceptor" evidence="2">
    <location>
        <position position="233"/>
    </location>
</feature>
<feature type="binding site" evidence="2">
    <location>
        <begin position="113"/>
        <end position="121"/>
    </location>
    <ligand>
        <name>ATP</name>
        <dbReference type="ChEBI" id="CHEBI:30616"/>
    </ligand>
</feature>
<feature type="binding site" evidence="2">
    <location>
        <position position="136"/>
    </location>
    <ligand>
        <name>ATP</name>
        <dbReference type="ChEBI" id="CHEBI:30616"/>
    </ligand>
</feature>
<feature type="modified residue" description="Phosphothreonine" evidence="1">
    <location>
        <position position="269"/>
    </location>
</feature>
<feature type="modified residue" description="Phosphotyrosine" evidence="1">
    <location>
        <position position="271"/>
    </location>
</feature>
<dbReference type="EC" id="2.7.11.24"/>
<dbReference type="EMBL" id="AC098573">
    <property type="protein sequence ID" value="AAT44204.1"/>
    <property type="status" value="ALT_SEQ"/>
    <property type="molecule type" value="Genomic_DNA"/>
</dbReference>
<dbReference type="EMBL" id="AC134929">
    <property type="protein sequence ID" value="AAS16898.2"/>
    <property type="status" value="ALT_SEQ"/>
    <property type="molecule type" value="Genomic_DNA"/>
</dbReference>
<dbReference type="EMBL" id="AP014961">
    <property type="status" value="NOT_ANNOTATED_CDS"/>
    <property type="molecule type" value="Genomic_DNA"/>
</dbReference>
<dbReference type="SMR" id="Q6L5D4"/>
<dbReference type="FunCoup" id="Q6L5D4">
    <property type="interactions" value="803"/>
</dbReference>
<dbReference type="STRING" id="39947.Q6L5D4"/>
<dbReference type="PaxDb" id="39947-Q6L5D4"/>
<dbReference type="InParanoid" id="Q6L5D4"/>
<dbReference type="Proteomes" id="UP000000763">
    <property type="component" value="Chromosome 5"/>
</dbReference>
<dbReference type="Proteomes" id="UP000059680">
    <property type="component" value="Chromosome 5"/>
</dbReference>
<dbReference type="GO" id="GO:0005737">
    <property type="term" value="C:cytoplasm"/>
    <property type="evidence" value="ECO:0000318"/>
    <property type="project" value="GO_Central"/>
</dbReference>
<dbReference type="GO" id="GO:0005634">
    <property type="term" value="C:nucleus"/>
    <property type="evidence" value="ECO:0000318"/>
    <property type="project" value="GO_Central"/>
</dbReference>
<dbReference type="GO" id="GO:0005524">
    <property type="term" value="F:ATP binding"/>
    <property type="evidence" value="ECO:0007669"/>
    <property type="project" value="UniProtKB-KW"/>
</dbReference>
<dbReference type="GO" id="GO:0004707">
    <property type="term" value="F:MAP kinase activity"/>
    <property type="evidence" value="ECO:0007669"/>
    <property type="project" value="UniProtKB-EC"/>
</dbReference>
<dbReference type="GO" id="GO:0106310">
    <property type="term" value="F:protein serine kinase activity"/>
    <property type="evidence" value="ECO:0007669"/>
    <property type="project" value="RHEA"/>
</dbReference>
<dbReference type="GO" id="GO:0004674">
    <property type="term" value="F:protein serine/threonine kinase activity"/>
    <property type="evidence" value="ECO:0000318"/>
    <property type="project" value="GO_Central"/>
</dbReference>
<dbReference type="GO" id="GO:0035556">
    <property type="term" value="P:intracellular signal transduction"/>
    <property type="evidence" value="ECO:0000318"/>
    <property type="project" value="GO_Central"/>
</dbReference>
<dbReference type="CDD" id="cd07859">
    <property type="entry name" value="STKc_TDY_MAPK"/>
    <property type="match status" value="1"/>
</dbReference>
<dbReference type="FunFam" id="1.10.510.10:FF:000017">
    <property type="entry name" value="Mitogen-activated protein kinase"/>
    <property type="match status" value="1"/>
</dbReference>
<dbReference type="FunFam" id="3.30.200.20:FF:000046">
    <property type="entry name" value="Mitogen-activated protein kinase"/>
    <property type="match status" value="1"/>
</dbReference>
<dbReference type="Gene3D" id="3.30.200.20">
    <property type="entry name" value="Phosphorylase Kinase, domain 1"/>
    <property type="match status" value="1"/>
</dbReference>
<dbReference type="Gene3D" id="1.10.510.10">
    <property type="entry name" value="Transferase(Phosphotransferase) domain 1"/>
    <property type="match status" value="1"/>
</dbReference>
<dbReference type="InterPro" id="IPR011009">
    <property type="entry name" value="Kinase-like_dom_sf"/>
</dbReference>
<dbReference type="InterPro" id="IPR050117">
    <property type="entry name" value="MAP_kinase"/>
</dbReference>
<dbReference type="InterPro" id="IPR003527">
    <property type="entry name" value="MAP_kinase_CS"/>
</dbReference>
<dbReference type="InterPro" id="IPR000719">
    <property type="entry name" value="Prot_kinase_dom"/>
</dbReference>
<dbReference type="InterPro" id="IPR017441">
    <property type="entry name" value="Protein_kinase_ATP_BS"/>
</dbReference>
<dbReference type="PANTHER" id="PTHR24055">
    <property type="entry name" value="MITOGEN-ACTIVATED PROTEIN KINASE"/>
    <property type="match status" value="1"/>
</dbReference>
<dbReference type="Pfam" id="PF00069">
    <property type="entry name" value="Pkinase"/>
    <property type="match status" value="1"/>
</dbReference>
<dbReference type="SMART" id="SM00220">
    <property type="entry name" value="S_TKc"/>
    <property type="match status" value="1"/>
</dbReference>
<dbReference type="SUPFAM" id="SSF56112">
    <property type="entry name" value="Protein kinase-like (PK-like)"/>
    <property type="match status" value="1"/>
</dbReference>
<dbReference type="PROSITE" id="PS01351">
    <property type="entry name" value="MAPK"/>
    <property type="match status" value="1"/>
</dbReference>
<dbReference type="PROSITE" id="PS00107">
    <property type="entry name" value="PROTEIN_KINASE_ATP"/>
    <property type="match status" value="1"/>
</dbReference>
<dbReference type="PROSITE" id="PS50011">
    <property type="entry name" value="PROTEIN_KINASE_DOM"/>
    <property type="match status" value="1"/>
</dbReference>
<comment type="catalytic activity">
    <reaction>
        <text>L-seryl-[protein] + ATP = O-phospho-L-seryl-[protein] + ADP + H(+)</text>
        <dbReference type="Rhea" id="RHEA:17989"/>
        <dbReference type="Rhea" id="RHEA-COMP:9863"/>
        <dbReference type="Rhea" id="RHEA-COMP:11604"/>
        <dbReference type="ChEBI" id="CHEBI:15378"/>
        <dbReference type="ChEBI" id="CHEBI:29999"/>
        <dbReference type="ChEBI" id="CHEBI:30616"/>
        <dbReference type="ChEBI" id="CHEBI:83421"/>
        <dbReference type="ChEBI" id="CHEBI:456216"/>
        <dbReference type="EC" id="2.7.11.24"/>
    </reaction>
</comment>
<comment type="catalytic activity">
    <reaction>
        <text>L-threonyl-[protein] + ATP = O-phospho-L-threonyl-[protein] + ADP + H(+)</text>
        <dbReference type="Rhea" id="RHEA:46608"/>
        <dbReference type="Rhea" id="RHEA-COMP:11060"/>
        <dbReference type="Rhea" id="RHEA-COMP:11605"/>
        <dbReference type="ChEBI" id="CHEBI:15378"/>
        <dbReference type="ChEBI" id="CHEBI:30013"/>
        <dbReference type="ChEBI" id="CHEBI:30616"/>
        <dbReference type="ChEBI" id="CHEBI:61977"/>
        <dbReference type="ChEBI" id="CHEBI:456216"/>
        <dbReference type="EC" id="2.7.11.24"/>
    </reaction>
</comment>
<comment type="activity regulation">
    <text evidence="1">Activated by threonine and tyrosine phosphorylation.</text>
</comment>
<comment type="domain">
    <text>The TXY motif contains the threonine and tyrosine residues whose phosphorylation activates the MAP kinases.</text>
</comment>
<comment type="PTM">
    <text evidence="1">Dually phosphorylated on Thr-269 and Tyr-271, which activates the enzyme.</text>
</comment>
<comment type="similarity">
    <text evidence="4">Belongs to the protein kinase superfamily. CMGC Ser/Thr protein kinase family. MAP kinase subfamily.</text>
</comment>
<comment type="sequence caution" evidence="4">
    <conflict type="erroneous gene model prediction">
        <sequence resource="EMBL-CDS" id="AAS16898"/>
    </conflict>
</comment>
<comment type="sequence caution" evidence="4">
    <conflict type="erroneous gene model prediction">
        <sequence resource="EMBL-CDS" id="AAT44204"/>
    </conflict>
</comment>
<gene>
    <name type="primary">MPK9</name>
    <name type="ordered locus">Os05g0582400</name>
    <name type="ordered locus">LOC_Os05g50560</name>
    <name type="ORF">OJ1651_G11.11</name>
    <name type="ORF">OSJNBb0035N21.16</name>
</gene>
<sequence length="700" mass="79081">MAVKMRIGRRRAIQQGIAEGGFEWRRVWGCREADSRGALWELVWGERSVRERNAAGAAEEVIALFIMDEMCDPASNLEYVVEKAKCDVHRTSSAEEFFTEYGDANRYRIQEVIGKGSYGVVCSAIDLHTRQKVAIKKVHNIFEHVSDAARILREIKLLRLLRHPDIVEIKHIMLPPSRRDFKDIYVVFELMESDLHQVIKANDDLTKEHYQFFLYQLLRALKYIHTASVYHRDLKPKNILANSNCKLKICDFGLARVAFNDTPTTVFWTDYVATRWYRAPELCGSFFSKYTPAIDIWSIGCIFAEVLTGKPLFPGKNVVHQLDLMTDLLGTPSMDTISRVRNEKARRYLSSMRKKDPVPFSQKFPNADPLALKLLQRLLAFDPKDRPTAEEALTDPYFKGLSKIDREPSCQPIRKLEFEFEQKKLSKEDIRELIFQEILEYHPQLQKNYRNGRERATFLYPSAVDQFKKQFSNLEESNGSGSAIPMERKHASLPRSTTVHSTPIPPKEQPLAASLKSSRPVSDEPCKNPWVMGGFSGNIPTSSQVSQVAKPVAPGRPVGSVFPYETGSTNDPYGPRGPVMSSGYPPQQQISQAYGYHQVPARMNCVEQSQAMDAYKMHSQSQTQAYAYPNSKVTADVALDMRGSTFHHSAGSKNGSLDRMVTQTDIYTRSLNGIVAAATSAGVGTNRKVGAVPISTSRMY</sequence>
<protein>
    <recommendedName>
        <fullName>Mitogen-activated protein kinase 9</fullName>
        <shortName>MAP kinase 9</shortName>
        <ecNumber>2.7.11.24</ecNumber>
    </recommendedName>
</protein>
<accession>Q6L5D4</accession>
<accession>Q75I00</accession>
<keyword id="KW-0067">ATP-binding</keyword>
<keyword id="KW-0418">Kinase</keyword>
<keyword id="KW-0547">Nucleotide-binding</keyword>
<keyword id="KW-0597">Phosphoprotein</keyword>
<keyword id="KW-1185">Reference proteome</keyword>
<keyword id="KW-0723">Serine/threonine-protein kinase</keyword>
<keyword id="KW-0808">Transferase</keyword>
<evidence type="ECO:0000250" key="1"/>
<evidence type="ECO:0000255" key="2">
    <source>
        <dbReference type="PROSITE-ProRule" id="PRU00159"/>
    </source>
</evidence>
<evidence type="ECO:0000256" key="3">
    <source>
        <dbReference type="SAM" id="MobiDB-lite"/>
    </source>
</evidence>
<evidence type="ECO:0000305" key="4"/>
<reference key="1">
    <citation type="journal article" date="2005" name="Mol. Genet. Genomics">
        <title>A fine physical map of the rice chromosome 5.</title>
        <authorList>
            <person name="Cheng C.-H."/>
            <person name="Chung M.C."/>
            <person name="Liu S.-M."/>
            <person name="Chen S.-K."/>
            <person name="Kao F.Y."/>
            <person name="Lin S.-J."/>
            <person name="Hsiao S.-H."/>
            <person name="Tseng I.C."/>
            <person name="Hsing Y.-I.C."/>
            <person name="Wu H.-P."/>
            <person name="Chen C.-S."/>
            <person name="Shaw J.-F."/>
            <person name="Wu J."/>
            <person name="Matsumoto T."/>
            <person name="Sasaki T."/>
            <person name="Chen H.-C."/>
            <person name="Chow T.-Y."/>
        </authorList>
    </citation>
    <scope>NUCLEOTIDE SEQUENCE [LARGE SCALE GENOMIC DNA]</scope>
    <source>
        <strain>cv. Nipponbare</strain>
    </source>
</reference>
<reference key="2">
    <citation type="journal article" date="2005" name="Nature">
        <title>The map-based sequence of the rice genome.</title>
        <authorList>
            <consortium name="International rice genome sequencing project (IRGSP)"/>
        </authorList>
    </citation>
    <scope>NUCLEOTIDE SEQUENCE [LARGE SCALE GENOMIC DNA]</scope>
    <source>
        <strain>cv. Nipponbare</strain>
    </source>
</reference>
<reference key="3">
    <citation type="journal article" date="2013" name="Rice">
        <title>Improvement of the Oryza sativa Nipponbare reference genome using next generation sequence and optical map data.</title>
        <authorList>
            <person name="Kawahara Y."/>
            <person name="de la Bastide M."/>
            <person name="Hamilton J.P."/>
            <person name="Kanamori H."/>
            <person name="McCombie W.R."/>
            <person name="Ouyang S."/>
            <person name="Schwartz D.C."/>
            <person name="Tanaka T."/>
            <person name="Wu J."/>
            <person name="Zhou S."/>
            <person name="Childs K.L."/>
            <person name="Davidson R.M."/>
            <person name="Lin H."/>
            <person name="Quesada-Ocampo L."/>
            <person name="Vaillancourt B."/>
            <person name="Sakai H."/>
            <person name="Lee S.S."/>
            <person name="Kim J."/>
            <person name="Numa H."/>
            <person name="Itoh T."/>
            <person name="Buell C.R."/>
            <person name="Matsumoto T."/>
        </authorList>
    </citation>
    <scope>GENOME REANNOTATION</scope>
    <source>
        <strain>cv. Nipponbare</strain>
    </source>
</reference>
<reference key="4">
    <citation type="journal article" date="2006" name="Mol. Plant Microbe Interact.">
        <title>Molecular analysis of the rice MAP kinase gene family in relation to Magnaporthe grisea infection.</title>
        <authorList>
            <person name="Reyna N.S."/>
            <person name="Yang Y."/>
        </authorList>
    </citation>
    <scope>NOMENCLATURE</scope>
</reference>
<proteinExistence type="inferred from homology"/>
<name>MPK9_ORYSJ</name>